<reference key="1">
    <citation type="journal article" date="2010" name="Genome Biol. Evol.">
        <title>Continuing evolution of Burkholderia mallei through genome reduction and large-scale rearrangements.</title>
        <authorList>
            <person name="Losada L."/>
            <person name="Ronning C.M."/>
            <person name="DeShazer D."/>
            <person name="Woods D."/>
            <person name="Fedorova N."/>
            <person name="Kim H.S."/>
            <person name="Shabalina S.A."/>
            <person name="Pearson T.R."/>
            <person name="Brinkac L."/>
            <person name="Tan P."/>
            <person name="Nandi T."/>
            <person name="Crabtree J."/>
            <person name="Badger J."/>
            <person name="Beckstrom-Sternberg S."/>
            <person name="Saqib M."/>
            <person name="Schutzer S.E."/>
            <person name="Keim P."/>
            <person name="Nierman W.C."/>
        </authorList>
    </citation>
    <scope>NUCLEOTIDE SEQUENCE [LARGE SCALE GENOMIC DNA]</scope>
    <source>
        <strain>NCTC 10229</strain>
    </source>
</reference>
<feature type="chain" id="PRO_0000336141" description="UPF0102 protein BMA10229_A1742">
    <location>
        <begin position="1"/>
        <end position="144"/>
    </location>
</feature>
<feature type="region of interest" description="Disordered" evidence="2">
    <location>
        <begin position="1"/>
        <end position="28"/>
    </location>
</feature>
<evidence type="ECO:0000255" key="1">
    <source>
        <dbReference type="HAMAP-Rule" id="MF_00048"/>
    </source>
</evidence>
<evidence type="ECO:0000256" key="2">
    <source>
        <dbReference type="SAM" id="MobiDB-lite"/>
    </source>
</evidence>
<name>Y4042_BURM9</name>
<accession>A2S703</accession>
<sequence>MCHAREASPGTGEPEAAPRDNFPRAAGSKRGVGAAFETRAQRFLERAGLALVARNVTVRGGEIDLVMRERDGTLVFVEVRARANSRYGGAAASIGVRKRMRLLLAAHAFWARTGGANACRFDVVAFEGGRLVWLRDAFRADDAG</sequence>
<dbReference type="EMBL" id="CP000546">
    <property type="protein sequence ID" value="ABN03886.1"/>
    <property type="molecule type" value="Genomic_DNA"/>
</dbReference>
<dbReference type="RefSeq" id="WP_004196859.1">
    <property type="nucleotide sequence ID" value="NC_008836.1"/>
</dbReference>
<dbReference type="SMR" id="A2S703"/>
<dbReference type="KEGG" id="bml:BMA10229_A1742"/>
<dbReference type="HOGENOM" id="CLU_115353_1_0_4"/>
<dbReference type="Proteomes" id="UP000002283">
    <property type="component" value="Chromosome I"/>
</dbReference>
<dbReference type="GO" id="GO:0003676">
    <property type="term" value="F:nucleic acid binding"/>
    <property type="evidence" value="ECO:0007669"/>
    <property type="project" value="InterPro"/>
</dbReference>
<dbReference type="Gene3D" id="3.40.1350.10">
    <property type="match status" value="1"/>
</dbReference>
<dbReference type="HAMAP" id="MF_00048">
    <property type="entry name" value="UPF0102"/>
    <property type="match status" value="1"/>
</dbReference>
<dbReference type="InterPro" id="IPR011335">
    <property type="entry name" value="Restrct_endonuc-II-like"/>
</dbReference>
<dbReference type="InterPro" id="IPR011856">
    <property type="entry name" value="tRNA_endonuc-like_dom_sf"/>
</dbReference>
<dbReference type="InterPro" id="IPR003509">
    <property type="entry name" value="UPF0102_YraN-like"/>
</dbReference>
<dbReference type="NCBIfam" id="NF009150">
    <property type="entry name" value="PRK12497.1-3"/>
    <property type="match status" value="1"/>
</dbReference>
<dbReference type="NCBIfam" id="TIGR00252">
    <property type="entry name" value="YraN family protein"/>
    <property type="match status" value="1"/>
</dbReference>
<dbReference type="PANTHER" id="PTHR34039">
    <property type="entry name" value="UPF0102 PROTEIN YRAN"/>
    <property type="match status" value="1"/>
</dbReference>
<dbReference type="PANTHER" id="PTHR34039:SF1">
    <property type="entry name" value="UPF0102 PROTEIN YRAN"/>
    <property type="match status" value="1"/>
</dbReference>
<dbReference type="Pfam" id="PF02021">
    <property type="entry name" value="UPF0102"/>
    <property type="match status" value="1"/>
</dbReference>
<dbReference type="SUPFAM" id="SSF52980">
    <property type="entry name" value="Restriction endonuclease-like"/>
    <property type="match status" value="1"/>
</dbReference>
<gene>
    <name type="ordered locus">BMA10229_A1742</name>
</gene>
<organism>
    <name type="scientific">Burkholderia mallei (strain NCTC 10229)</name>
    <dbReference type="NCBI Taxonomy" id="412022"/>
    <lineage>
        <taxon>Bacteria</taxon>
        <taxon>Pseudomonadati</taxon>
        <taxon>Pseudomonadota</taxon>
        <taxon>Betaproteobacteria</taxon>
        <taxon>Burkholderiales</taxon>
        <taxon>Burkholderiaceae</taxon>
        <taxon>Burkholderia</taxon>
        <taxon>pseudomallei group</taxon>
    </lineage>
</organism>
<proteinExistence type="inferred from homology"/>
<protein>
    <recommendedName>
        <fullName evidence="1">UPF0102 protein BMA10229_A1742</fullName>
    </recommendedName>
</protein>
<comment type="similarity">
    <text evidence="1">Belongs to the UPF0102 family.</text>
</comment>